<sequence>MFDQTTNTEVHQLTVGKIETANGTIKPQLLRDAVKRAVTNFFSQLDGQEASEVYEMVLCEVEAPLLDIIMQHTRGNQTRAANMLGINRGTLRKKLKKYGMN</sequence>
<name>FIS_SHEFN</name>
<feature type="chain" id="PRO_1000023338" description="DNA-binding protein Fis">
    <location>
        <begin position="1"/>
        <end position="101"/>
    </location>
</feature>
<feature type="DNA-binding region" description="H-T-H motif" evidence="1">
    <location>
        <begin position="77"/>
        <end position="96"/>
    </location>
</feature>
<keyword id="KW-0010">Activator</keyword>
<keyword id="KW-0238">DNA-binding</keyword>
<keyword id="KW-1185">Reference proteome</keyword>
<keyword id="KW-0804">Transcription</keyword>
<keyword id="KW-0805">Transcription regulation</keyword>
<organism>
    <name type="scientific">Shewanella frigidimarina (strain NCIMB 400)</name>
    <dbReference type="NCBI Taxonomy" id="318167"/>
    <lineage>
        <taxon>Bacteria</taxon>
        <taxon>Pseudomonadati</taxon>
        <taxon>Pseudomonadota</taxon>
        <taxon>Gammaproteobacteria</taxon>
        <taxon>Alteromonadales</taxon>
        <taxon>Shewanellaceae</taxon>
        <taxon>Shewanella</taxon>
    </lineage>
</organism>
<gene>
    <name evidence="1" type="primary">fis</name>
    <name type="ordered locus">Sfri_0453</name>
</gene>
<protein>
    <recommendedName>
        <fullName evidence="1">DNA-binding protein Fis</fullName>
    </recommendedName>
</protein>
<proteinExistence type="inferred from homology"/>
<accession>Q088K0</accession>
<evidence type="ECO:0000255" key="1">
    <source>
        <dbReference type="HAMAP-Rule" id="MF_00166"/>
    </source>
</evidence>
<comment type="function">
    <text evidence="1">Activates ribosomal RNA transcription. Plays a direct role in upstream activation of rRNA promoters.</text>
</comment>
<comment type="subunit">
    <text evidence="1">Homodimer.</text>
</comment>
<comment type="similarity">
    <text evidence="1">Belongs to the transcriptional regulatory Fis family.</text>
</comment>
<dbReference type="EMBL" id="CP000447">
    <property type="protein sequence ID" value="ABI70315.1"/>
    <property type="molecule type" value="Genomic_DNA"/>
</dbReference>
<dbReference type="RefSeq" id="WP_011635942.1">
    <property type="nucleotide sequence ID" value="NC_008345.1"/>
</dbReference>
<dbReference type="SMR" id="Q088K0"/>
<dbReference type="STRING" id="318167.Sfri_0453"/>
<dbReference type="GeneID" id="90571726"/>
<dbReference type="KEGG" id="sfr:Sfri_0453"/>
<dbReference type="eggNOG" id="COG2901">
    <property type="taxonomic scope" value="Bacteria"/>
</dbReference>
<dbReference type="HOGENOM" id="CLU_158040_3_3_6"/>
<dbReference type="OrthoDB" id="9802388at2"/>
<dbReference type="Proteomes" id="UP000000684">
    <property type="component" value="Chromosome"/>
</dbReference>
<dbReference type="GO" id="GO:0003700">
    <property type="term" value="F:DNA-binding transcription factor activity"/>
    <property type="evidence" value="ECO:0007669"/>
    <property type="project" value="UniProtKB-UniRule"/>
</dbReference>
<dbReference type="GO" id="GO:0043565">
    <property type="term" value="F:sequence-specific DNA binding"/>
    <property type="evidence" value="ECO:0007669"/>
    <property type="project" value="InterPro"/>
</dbReference>
<dbReference type="FunFam" id="1.10.10.60:FF:000006">
    <property type="entry name" value="DNA-binding protein Fis"/>
    <property type="match status" value="1"/>
</dbReference>
<dbReference type="Gene3D" id="1.10.10.60">
    <property type="entry name" value="Homeodomain-like"/>
    <property type="match status" value="1"/>
</dbReference>
<dbReference type="HAMAP" id="MF_00166">
    <property type="entry name" value="DNA_binding_Fis"/>
    <property type="match status" value="1"/>
</dbReference>
<dbReference type="InterPro" id="IPR005412">
    <property type="entry name" value="Fis_DNA-bd"/>
</dbReference>
<dbReference type="InterPro" id="IPR009057">
    <property type="entry name" value="Homeodomain-like_sf"/>
</dbReference>
<dbReference type="InterPro" id="IPR002197">
    <property type="entry name" value="HTH_Fis"/>
</dbReference>
<dbReference type="InterPro" id="IPR050207">
    <property type="entry name" value="Trans_regulatory_Fis"/>
</dbReference>
<dbReference type="NCBIfam" id="NF001659">
    <property type="entry name" value="PRK00430.1"/>
    <property type="match status" value="1"/>
</dbReference>
<dbReference type="PANTHER" id="PTHR47918">
    <property type="entry name" value="DNA-BINDING PROTEIN FIS"/>
    <property type="match status" value="1"/>
</dbReference>
<dbReference type="PANTHER" id="PTHR47918:SF1">
    <property type="entry name" value="DNA-BINDING PROTEIN FIS"/>
    <property type="match status" value="1"/>
</dbReference>
<dbReference type="Pfam" id="PF02954">
    <property type="entry name" value="HTH_8"/>
    <property type="match status" value="1"/>
</dbReference>
<dbReference type="PIRSF" id="PIRSF002097">
    <property type="entry name" value="DNA-binding_Fis"/>
    <property type="match status" value="1"/>
</dbReference>
<dbReference type="PRINTS" id="PR01591">
    <property type="entry name" value="DNABINDNGFIS"/>
</dbReference>
<dbReference type="PRINTS" id="PR01590">
    <property type="entry name" value="HTHFIS"/>
</dbReference>
<dbReference type="SUPFAM" id="SSF46689">
    <property type="entry name" value="Homeodomain-like"/>
    <property type="match status" value="1"/>
</dbReference>
<reference key="1">
    <citation type="submission" date="2006-08" db="EMBL/GenBank/DDBJ databases">
        <title>Complete sequence of Shewanella frigidimarina NCIMB 400.</title>
        <authorList>
            <consortium name="US DOE Joint Genome Institute"/>
            <person name="Copeland A."/>
            <person name="Lucas S."/>
            <person name="Lapidus A."/>
            <person name="Barry K."/>
            <person name="Detter J.C."/>
            <person name="Glavina del Rio T."/>
            <person name="Hammon N."/>
            <person name="Israni S."/>
            <person name="Dalin E."/>
            <person name="Tice H."/>
            <person name="Pitluck S."/>
            <person name="Fredrickson J.K."/>
            <person name="Kolker E."/>
            <person name="McCuel L.A."/>
            <person name="DiChristina T."/>
            <person name="Nealson K.H."/>
            <person name="Newman D."/>
            <person name="Tiedje J.M."/>
            <person name="Zhou J."/>
            <person name="Romine M.F."/>
            <person name="Culley D.E."/>
            <person name="Serres M."/>
            <person name="Chertkov O."/>
            <person name="Brettin T."/>
            <person name="Bruce D."/>
            <person name="Han C."/>
            <person name="Tapia R."/>
            <person name="Gilna P."/>
            <person name="Schmutz J."/>
            <person name="Larimer F."/>
            <person name="Land M."/>
            <person name="Hauser L."/>
            <person name="Kyrpides N."/>
            <person name="Mikhailova N."/>
            <person name="Richardson P."/>
        </authorList>
    </citation>
    <scope>NUCLEOTIDE SEQUENCE [LARGE SCALE GENOMIC DNA]</scope>
    <source>
        <strain>NCIMB 400</strain>
    </source>
</reference>